<gene>
    <name type="primary">MB</name>
</gene>
<dbReference type="EC" id="1.7.-.-" evidence="1"/>
<dbReference type="EC" id="1.11.1.-" evidence="1"/>
<dbReference type="PIR" id="A02476">
    <property type="entry name" value="MYHH"/>
</dbReference>
<dbReference type="SMR" id="P02156"/>
<dbReference type="FunCoup" id="P02156">
    <property type="interactions" value="120"/>
</dbReference>
<dbReference type="STRING" id="9365.ENSEEUP00000004665"/>
<dbReference type="eggNOG" id="KOG3378">
    <property type="taxonomic scope" value="Eukaryota"/>
</dbReference>
<dbReference type="InParanoid" id="P02156"/>
<dbReference type="Proteomes" id="UP000079721">
    <property type="component" value="Unplaced"/>
</dbReference>
<dbReference type="GO" id="GO:0070062">
    <property type="term" value="C:extracellular exosome"/>
    <property type="evidence" value="ECO:0007669"/>
    <property type="project" value="TreeGrafter"/>
</dbReference>
<dbReference type="GO" id="GO:0016528">
    <property type="term" value="C:sarcoplasm"/>
    <property type="evidence" value="ECO:0000250"/>
    <property type="project" value="UniProtKB"/>
</dbReference>
<dbReference type="GO" id="GO:0020037">
    <property type="term" value="F:heme binding"/>
    <property type="evidence" value="ECO:0007669"/>
    <property type="project" value="InterPro"/>
</dbReference>
<dbReference type="GO" id="GO:0046872">
    <property type="term" value="F:metal ion binding"/>
    <property type="evidence" value="ECO:0007669"/>
    <property type="project" value="UniProtKB-KW"/>
</dbReference>
<dbReference type="GO" id="GO:0098809">
    <property type="term" value="F:nitrite reductase activity"/>
    <property type="evidence" value="ECO:0000250"/>
    <property type="project" value="UniProtKB"/>
</dbReference>
<dbReference type="GO" id="GO:0019825">
    <property type="term" value="F:oxygen binding"/>
    <property type="evidence" value="ECO:0007669"/>
    <property type="project" value="InterPro"/>
</dbReference>
<dbReference type="GO" id="GO:0005344">
    <property type="term" value="F:oxygen carrier activity"/>
    <property type="evidence" value="ECO:0000250"/>
    <property type="project" value="UniProtKB"/>
</dbReference>
<dbReference type="GO" id="GO:0004601">
    <property type="term" value="F:peroxidase activity"/>
    <property type="evidence" value="ECO:0000250"/>
    <property type="project" value="UniProtKB"/>
</dbReference>
<dbReference type="GO" id="GO:0019430">
    <property type="term" value="P:removal of superoxide radicals"/>
    <property type="evidence" value="ECO:0000250"/>
    <property type="project" value="UniProtKB"/>
</dbReference>
<dbReference type="CDD" id="cd08926">
    <property type="entry name" value="Mb"/>
    <property type="match status" value="1"/>
</dbReference>
<dbReference type="Gene3D" id="6.10.140.2100">
    <property type="match status" value="1"/>
</dbReference>
<dbReference type="Gene3D" id="6.10.140.2110">
    <property type="match status" value="1"/>
</dbReference>
<dbReference type="InterPro" id="IPR000971">
    <property type="entry name" value="Globin"/>
</dbReference>
<dbReference type="InterPro" id="IPR009050">
    <property type="entry name" value="Globin-like_sf"/>
</dbReference>
<dbReference type="InterPro" id="IPR002335">
    <property type="entry name" value="Myoglobin"/>
</dbReference>
<dbReference type="PANTHER" id="PTHR47132">
    <property type="entry name" value="MYOGLOBIN"/>
    <property type="match status" value="1"/>
</dbReference>
<dbReference type="PANTHER" id="PTHR47132:SF1">
    <property type="entry name" value="MYOGLOBIN"/>
    <property type="match status" value="1"/>
</dbReference>
<dbReference type="Pfam" id="PF00042">
    <property type="entry name" value="Globin"/>
    <property type="match status" value="1"/>
</dbReference>
<dbReference type="PRINTS" id="PR00613">
    <property type="entry name" value="MYOGLOBIN"/>
</dbReference>
<dbReference type="SUPFAM" id="SSF46458">
    <property type="entry name" value="Globin-like"/>
    <property type="match status" value="1"/>
</dbReference>
<dbReference type="PROSITE" id="PS01033">
    <property type="entry name" value="GLOBIN"/>
    <property type="match status" value="1"/>
</dbReference>
<keyword id="KW-0963">Cytoplasm</keyword>
<keyword id="KW-0903">Direct protein sequencing</keyword>
<keyword id="KW-0349">Heme</keyword>
<keyword id="KW-0408">Iron</keyword>
<keyword id="KW-0479">Metal-binding</keyword>
<keyword id="KW-0514">Muscle protein</keyword>
<keyword id="KW-0560">Oxidoreductase</keyword>
<keyword id="KW-0561">Oxygen transport</keyword>
<keyword id="KW-0597">Phosphoprotein</keyword>
<keyword id="KW-1185">Reference proteome</keyword>
<keyword id="KW-0813">Transport</keyword>
<feature type="initiator methionine" description="Removed" evidence="8">
    <location>
        <position position="1"/>
    </location>
</feature>
<feature type="chain" id="PRO_0000053292" description="Myoglobin">
    <location>
        <begin position="2"/>
        <end position="154"/>
    </location>
</feature>
<feature type="domain" description="Globin" evidence="7">
    <location>
        <begin position="2"/>
        <end position="148"/>
    </location>
</feature>
<feature type="binding site" evidence="5">
    <location>
        <position position="65"/>
    </location>
    <ligand>
        <name>nitrite</name>
        <dbReference type="ChEBI" id="CHEBI:16301"/>
    </ligand>
</feature>
<feature type="binding site" evidence="3 7">
    <location>
        <position position="65"/>
    </location>
    <ligand>
        <name>O2</name>
        <dbReference type="ChEBI" id="CHEBI:15379"/>
    </ligand>
</feature>
<feature type="binding site" description="proximal binding residue" evidence="1">
    <location>
        <position position="94"/>
    </location>
    <ligand>
        <name>heme b</name>
        <dbReference type="ChEBI" id="CHEBI:60344"/>
    </ligand>
    <ligandPart>
        <name>Fe</name>
        <dbReference type="ChEBI" id="CHEBI:18248"/>
    </ligandPart>
</feature>
<feature type="modified residue" description="Phosphoserine" evidence="6">
    <location>
        <position position="4"/>
    </location>
</feature>
<feature type="modified residue" description="Phosphothreonine" evidence="4">
    <location>
        <position position="68"/>
    </location>
</feature>
<protein>
    <recommendedName>
        <fullName>Myoglobin</fullName>
    </recommendedName>
    <alternativeName>
        <fullName evidence="1">Nitrite reductase MB</fullName>
        <ecNumber evidence="1">1.7.-.-</ecNumber>
    </alternativeName>
    <alternativeName>
        <fullName evidence="1">Pseudoperoxidase MB</fullName>
        <ecNumber evidence="1">1.11.1.-</ecNumber>
    </alternativeName>
</protein>
<reference key="1">
    <citation type="journal article" date="1975" name="Biochim. Biophys. Acta">
        <title>The primary structure of the myoglobin of the insectivore Erinaceus europaeus (common European hedgehog).</title>
        <authorList>
            <person name="Romero-Herrera A.E."/>
            <person name="Lehmann H."/>
            <person name="Fakes W."/>
        </authorList>
    </citation>
    <scope>PROTEIN SEQUENCE OF 2-154</scope>
    <source>
        <tissue>Skeletal muscle</tissue>
    </source>
</reference>
<organism>
    <name type="scientific">Erinaceus europaeus</name>
    <name type="common">Western European hedgehog</name>
    <dbReference type="NCBI Taxonomy" id="9365"/>
    <lineage>
        <taxon>Eukaryota</taxon>
        <taxon>Metazoa</taxon>
        <taxon>Chordata</taxon>
        <taxon>Craniata</taxon>
        <taxon>Vertebrata</taxon>
        <taxon>Euteleostomi</taxon>
        <taxon>Mammalia</taxon>
        <taxon>Eutheria</taxon>
        <taxon>Laurasiatheria</taxon>
        <taxon>Eulipotyphla</taxon>
        <taxon>Erinaceidae</taxon>
        <taxon>Erinaceinae</taxon>
        <taxon>Erinaceus</taxon>
    </lineage>
</organism>
<comment type="function">
    <text evidence="1">Monomeric heme protein which primary function is to store oxygen and facilitate its diffusion within muscle tissues. Reversibly binds oxygen through a pentacoordinated heme iron and enables its timely and efficient release as needed during periods of heightened demand. Depending on the oxidative conditions of tissues and cells, and in addition to its ability to bind oxygen, it also has a nitrite reductase activity whereby it regulates the production of bioactive nitric oxide. Under stress conditions, like hypoxia and anoxia, it also protects cells against reactive oxygen species thanks to its pseudoperoxidase activity.</text>
</comment>
<comment type="catalytic activity">
    <reaction evidence="1">
        <text>Fe(III)-heme b-[protein] + nitric oxide + H2O = Fe(II)-heme b-[protein] + nitrite + 2 H(+)</text>
        <dbReference type="Rhea" id="RHEA:77711"/>
        <dbReference type="Rhea" id="RHEA-COMP:18975"/>
        <dbReference type="Rhea" id="RHEA-COMP:18976"/>
        <dbReference type="ChEBI" id="CHEBI:15377"/>
        <dbReference type="ChEBI" id="CHEBI:15378"/>
        <dbReference type="ChEBI" id="CHEBI:16301"/>
        <dbReference type="ChEBI" id="CHEBI:16480"/>
        <dbReference type="ChEBI" id="CHEBI:55376"/>
        <dbReference type="ChEBI" id="CHEBI:60344"/>
    </reaction>
    <physiologicalReaction direction="right-to-left" evidence="1">
        <dbReference type="Rhea" id="RHEA:77713"/>
    </physiologicalReaction>
</comment>
<comment type="catalytic activity">
    <reaction evidence="1">
        <text>H2O2 + AH2 = A + 2 H2O</text>
        <dbReference type="Rhea" id="RHEA:30275"/>
        <dbReference type="ChEBI" id="CHEBI:13193"/>
        <dbReference type="ChEBI" id="CHEBI:15377"/>
        <dbReference type="ChEBI" id="CHEBI:16240"/>
        <dbReference type="ChEBI" id="CHEBI:17499"/>
    </reaction>
</comment>
<comment type="subunit">
    <text evidence="2">Monomeric.</text>
</comment>
<comment type="subcellular location">
    <subcellularLocation>
        <location evidence="1">Cytoplasm</location>
        <location evidence="1">Sarcoplasm</location>
    </subcellularLocation>
</comment>
<comment type="similarity">
    <text evidence="7">Belongs to the globin family.</text>
</comment>
<evidence type="ECO:0000250" key="1">
    <source>
        <dbReference type="UniProtKB" id="P02144"/>
    </source>
</evidence>
<evidence type="ECO:0000250" key="2">
    <source>
        <dbReference type="UniProtKB" id="P02185"/>
    </source>
</evidence>
<evidence type="ECO:0000250" key="3">
    <source>
        <dbReference type="UniProtKB" id="P02189"/>
    </source>
</evidence>
<evidence type="ECO:0000250" key="4">
    <source>
        <dbReference type="UniProtKB" id="P04247"/>
    </source>
</evidence>
<evidence type="ECO:0000250" key="5">
    <source>
        <dbReference type="UniProtKB" id="P68082"/>
    </source>
</evidence>
<evidence type="ECO:0000250" key="6">
    <source>
        <dbReference type="UniProtKB" id="Q9QZ76"/>
    </source>
</evidence>
<evidence type="ECO:0000255" key="7">
    <source>
        <dbReference type="PROSITE-ProRule" id="PRU00238"/>
    </source>
</evidence>
<evidence type="ECO:0000269" key="8">
    <source>
    </source>
</evidence>
<accession>P02156</accession>
<name>MYG_ERIEU</name>
<sequence length="154" mass="17115">MGLSDGEWQLVLNVWGKVEADIPGHGQEVLIRLFKDHPETLEKFDKFKHLKSEDEMKSSEDLKKHGTTVLTALGGILKKKGQHEAQLAPLAQSHANKHKIPVKYLEFISEAIIQVLKSKHAGDFGADAQGAMSKALELFRNDIAAKYKELGFQG</sequence>
<proteinExistence type="evidence at protein level"/>